<organism>
    <name type="scientific">Botryotinia fuckeliana (strain B05.10)</name>
    <name type="common">Noble rot fungus</name>
    <name type="synonym">Botrytis cinerea</name>
    <dbReference type="NCBI Taxonomy" id="332648"/>
    <lineage>
        <taxon>Eukaryota</taxon>
        <taxon>Fungi</taxon>
        <taxon>Dikarya</taxon>
        <taxon>Ascomycota</taxon>
        <taxon>Pezizomycotina</taxon>
        <taxon>Leotiomycetes</taxon>
        <taxon>Helotiales</taxon>
        <taxon>Sclerotiniaceae</taxon>
        <taxon>Botrytis</taxon>
    </lineage>
</organism>
<feature type="chain" id="PRO_0000324883" description="Protein pxr1">
    <location>
        <begin position="1"/>
        <end position="368"/>
    </location>
</feature>
<feature type="domain" description="G-patch" evidence="2">
    <location>
        <begin position="25"/>
        <end position="79"/>
    </location>
</feature>
<feature type="region of interest" description="Disordered" evidence="3">
    <location>
        <begin position="1"/>
        <end position="28"/>
    </location>
</feature>
<feature type="region of interest" description="Disordered" evidence="3">
    <location>
        <begin position="161"/>
        <end position="339"/>
    </location>
</feature>
<feature type="compositionally biased region" description="Polar residues" evidence="3">
    <location>
        <begin position="15"/>
        <end position="27"/>
    </location>
</feature>
<feature type="compositionally biased region" description="Acidic residues" evidence="3">
    <location>
        <begin position="168"/>
        <end position="182"/>
    </location>
</feature>
<feature type="compositionally biased region" description="Basic residues" evidence="3">
    <location>
        <begin position="209"/>
        <end position="226"/>
    </location>
</feature>
<feature type="compositionally biased region" description="Basic residues" evidence="3">
    <location>
        <begin position="242"/>
        <end position="254"/>
    </location>
</feature>
<feature type="compositionally biased region" description="Basic residues" evidence="3">
    <location>
        <begin position="271"/>
        <end position="283"/>
    </location>
</feature>
<feature type="compositionally biased region" description="Basic residues" evidence="3">
    <location>
        <begin position="301"/>
        <end position="312"/>
    </location>
</feature>
<feature type="compositionally biased region" description="Low complexity" evidence="3">
    <location>
        <begin position="313"/>
        <end position="324"/>
    </location>
</feature>
<feature type="compositionally biased region" description="Polar residues" evidence="3">
    <location>
        <begin position="325"/>
        <end position="334"/>
    </location>
</feature>
<gene>
    <name type="primary">pxr1</name>
    <name type="ORF">BC1G_00212</name>
    <name type="ORF">BCIN_01g07420</name>
</gene>
<comment type="function">
    <text evidence="1">Involved in rRNA-processing at A0, A1 and A2 sites and negatively regulates telomerase.</text>
</comment>
<comment type="subcellular location">
    <subcellularLocation>
        <location evidence="1">Nucleus</location>
        <location evidence="1">Nucleolus</location>
    </subcellularLocation>
</comment>
<comment type="similarity">
    <text evidence="4">Belongs to the PINX1 family.</text>
</comment>
<evidence type="ECO:0000250" key="1"/>
<evidence type="ECO:0000255" key="2">
    <source>
        <dbReference type="PROSITE-ProRule" id="PRU00092"/>
    </source>
</evidence>
<evidence type="ECO:0000256" key="3">
    <source>
        <dbReference type="SAM" id="MobiDB-lite"/>
    </source>
</evidence>
<evidence type="ECO:0000305" key="4"/>
<dbReference type="EMBL" id="CP009805">
    <property type="protein sequence ID" value="ATZ46070.1"/>
    <property type="molecule type" value="Genomic_DNA"/>
</dbReference>
<dbReference type="SMR" id="A6RIE1"/>
<dbReference type="EnsemblFungi" id="Bcin01g07420.1">
    <property type="protein sequence ID" value="Bcin01p07420.1"/>
    <property type="gene ID" value="Bcin01g07420"/>
</dbReference>
<dbReference type="GeneID" id="5441774"/>
<dbReference type="KEGG" id="bfu:BCIN_01g07420"/>
<dbReference type="VEuPathDB" id="FungiDB:Bcin01g07420"/>
<dbReference type="OMA" id="PCWDQSS"/>
<dbReference type="OrthoDB" id="29523at2759"/>
<dbReference type="Proteomes" id="UP000001798">
    <property type="component" value="Chromosome bcin01"/>
</dbReference>
<dbReference type="GO" id="GO:0005730">
    <property type="term" value="C:nucleolus"/>
    <property type="evidence" value="ECO:0007669"/>
    <property type="project" value="UniProtKB-SubCell"/>
</dbReference>
<dbReference type="GO" id="GO:0003676">
    <property type="term" value="F:nucleic acid binding"/>
    <property type="evidence" value="ECO:0007669"/>
    <property type="project" value="InterPro"/>
</dbReference>
<dbReference type="GO" id="GO:0006364">
    <property type="term" value="P:rRNA processing"/>
    <property type="evidence" value="ECO:0007669"/>
    <property type="project" value="UniProtKB-KW"/>
</dbReference>
<dbReference type="InterPro" id="IPR000467">
    <property type="entry name" value="G_patch_dom"/>
</dbReference>
<dbReference type="InterPro" id="IPR050656">
    <property type="entry name" value="PINX1"/>
</dbReference>
<dbReference type="PANTHER" id="PTHR23149">
    <property type="entry name" value="G PATCH DOMAIN CONTAINING PROTEIN"/>
    <property type="match status" value="1"/>
</dbReference>
<dbReference type="PANTHER" id="PTHR23149:SF31">
    <property type="entry name" value="PROTEIN PXR1"/>
    <property type="match status" value="1"/>
</dbReference>
<dbReference type="Pfam" id="PF01585">
    <property type="entry name" value="G-patch"/>
    <property type="match status" value="1"/>
</dbReference>
<dbReference type="SMART" id="SM00443">
    <property type="entry name" value="G_patch"/>
    <property type="match status" value="1"/>
</dbReference>
<dbReference type="PROSITE" id="PS50174">
    <property type="entry name" value="G_PATCH"/>
    <property type="match status" value="1"/>
</dbReference>
<accession>A6RIE1</accession>
<accession>A0A384J6I6</accession>
<reference key="1">
    <citation type="journal article" date="2011" name="PLoS Genet.">
        <title>Genomic analysis of the necrotrophic fungal pathogens Sclerotinia sclerotiorum and Botrytis cinerea.</title>
        <authorList>
            <person name="Amselem J."/>
            <person name="Cuomo C.A."/>
            <person name="van Kan J.A.L."/>
            <person name="Viaud M."/>
            <person name="Benito E.P."/>
            <person name="Couloux A."/>
            <person name="Coutinho P.M."/>
            <person name="de Vries R.P."/>
            <person name="Dyer P.S."/>
            <person name="Fillinger S."/>
            <person name="Fournier E."/>
            <person name="Gout L."/>
            <person name="Hahn M."/>
            <person name="Kohn L."/>
            <person name="Lapalu N."/>
            <person name="Plummer K.M."/>
            <person name="Pradier J.-M."/>
            <person name="Quevillon E."/>
            <person name="Sharon A."/>
            <person name="Simon A."/>
            <person name="ten Have A."/>
            <person name="Tudzynski B."/>
            <person name="Tudzynski P."/>
            <person name="Wincker P."/>
            <person name="Andrew M."/>
            <person name="Anthouard V."/>
            <person name="Beever R.E."/>
            <person name="Beffa R."/>
            <person name="Benoit I."/>
            <person name="Bouzid O."/>
            <person name="Brault B."/>
            <person name="Chen Z."/>
            <person name="Choquer M."/>
            <person name="Collemare J."/>
            <person name="Cotton P."/>
            <person name="Danchin E.G."/>
            <person name="Da Silva C."/>
            <person name="Gautier A."/>
            <person name="Giraud C."/>
            <person name="Giraud T."/>
            <person name="Gonzalez C."/>
            <person name="Grossetete S."/>
            <person name="Gueldener U."/>
            <person name="Henrissat B."/>
            <person name="Howlett B.J."/>
            <person name="Kodira C."/>
            <person name="Kretschmer M."/>
            <person name="Lappartient A."/>
            <person name="Leroch M."/>
            <person name="Levis C."/>
            <person name="Mauceli E."/>
            <person name="Neuveglise C."/>
            <person name="Oeser B."/>
            <person name="Pearson M."/>
            <person name="Poulain J."/>
            <person name="Poussereau N."/>
            <person name="Quesneville H."/>
            <person name="Rascle C."/>
            <person name="Schumacher J."/>
            <person name="Segurens B."/>
            <person name="Sexton A."/>
            <person name="Silva E."/>
            <person name="Sirven C."/>
            <person name="Soanes D.M."/>
            <person name="Talbot N.J."/>
            <person name="Templeton M."/>
            <person name="Yandava C."/>
            <person name="Yarden O."/>
            <person name="Zeng Q."/>
            <person name="Rollins J.A."/>
            <person name="Lebrun M.-H."/>
            <person name="Dickman M."/>
        </authorList>
    </citation>
    <scope>NUCLEOTIDE SEQUENCE [LARGE SCALE GENOMIC DNA]</scope>
    <source>
        <strain>B05.10</strain>
    </source>
</reference>
<reference key="2">
    <citation type="journal article" date="2012" name="Eukaryot. Cell">
        <title>Genome update of Botrytis cinerea strains B05.10 and T4.</title>
        <authorList>
            <person name="Staats M."/>
            <person name="van Kan J.A.L."/>
        </authorList>
    </citation>
    <scope>NUCLEOTIDE SEQUENCE [LARGE SCALE GENOMIC DNA]</scope>
    <scope>GENOME REANNOTATION</scope>
    <source>
        <strain>B05.10</strain>
    </source>
</reference>
<reference key="3">
    <citation type="journal article" date="2017" name="Mol. Plant Pathol.">
        <title>A gapless genome sequence of the fungus Botrytis cinerea.</title>
        <authorList>
            <person name="van Kan J.A.L."/>
            <person name="Stassen J.H.M."/>
            <person name="Mosbach A."/>
            <person name="van der Lee T.A.J."/>
            <person name="Faino L."/>
            <person name="Farmer A.D."/>
            <person name="Papasotiriou D.G."/>
            <person name="Zhou S."/>
            <person name="Seidl M.F."/>
            <person name="Cottam E."/>
            <person name="Edel D."/>
            <person name="Hahn M."/>
            <person name="Schwartz D.C."/>
            <person name="Dietrich R.A."/>
            <person name="Widdison S."/>
            <person name="Scalliet G."/>
        </authorList>
    </citation>
    <scope>NUCLEOTIDE SEQUENCE [LARGE SCALE GENOMIC DNA]</scope>
    <scope>GENOME REANNOTATION</scope>
    <source>
        <strain>B05.10</strain>
    </source>
</reference>
<protein>
    <recommendedName>
        <fullName>Protein pxr1</fullName>
    </recommendedName>
    <alternativeName>
        <fullName>PinX1-related protein 1</fullName>
    </alternativeName>
</protein>
<name>PXR1_BOTFB</name>
<proteinExistence type="inferred from homology"/>
<keyword id="KW-0539">Nucleus</keyword>
<keyword id="KW-1185">Reference proteome</keyword>
<keyword id="KW-0690">Ribosome biogenesis</keyword>
<keyword id="KW-0698">rRNA processing</keyword>
<sequence>MGLAAPKNKIKLSHDPNNTRWSGNTDSFGHRMMKSQGWTPGEYLGAKDAAHAEFHTEANASHIRVVIKDNTLGLGAKIGSGVGHGECTGLDVFQNLLGRLNGKEEAEIEKEQKGREDLKRAIYAERKWGSIRFVKGGVLIGDKIQDLIDGEKERLKALEIKEKAAESSSEESDSSSDEEEEKSPEPVAEKKKSSKRKREEQEDEEKTSSKKSKKEKKEKKEKKSKKRQSEDEDEKDKSESKKSKKSKKDRKSKSKSTSEAEDETLDESALKARKKEKKEKKRKEKEAAGADTEEASSTSKSSKKSKKDKHKSPSTSKTSTKESTPIVSESSGRSTPMGIRSIRARHIAQKRMASMDVASLNQIFMIKS</sequence>